<dbReference type="EC" id="3.1.26.5" evidence="1"/>
<dbReference type="EMBL" id="AY596297">
    <property type="protein sequence ID" value="AAV46125.1"/>
    <property type="molecule type" value="Genomic_DNA"/>
</dbReference>
<dbReference type="RefSeq" id="WP_011223480.1">
    <property type="nucleotide sequence ID" value="NC_006396.1"/>
</dbReference>
<dbReference type="SMR" id="Q5V2X7"/>
<dbReference type="STRING" id="272569.rrnAC1175"/>
<dbReference type="PaxDb" id="272569-rrnAC1175"/>
<dbReference type="EnsemblBacteria" id="AAV46125">
    <property type="protein sequence ID" value="AAV46125"/>
    <property type="gene ID" value="rrnAC1175"/>
</dbReference>
<dbReference type="GeneID" id="40152170"/>
<dbReference type="KEGG" id="hma:rrnAC1175"/>
<dbReference type="PATRIC" id="fig|272569.17.peg.1891"/>
<dbReference type="eggNOG" id="arCOG01365">
    <property type="taxonomic scope" value="Archaea"/>
</dbReference>
<dbReference type="HOGENOM" id="CLU_137733_0_0_2"/>
<dbReference type="Proteomes" id="UP000001169">
    <property type="component" value="Chromosome I"/>
</dbReference>
<dbReference type="GO" id="GO:0005737">
    <property type="term" value="C:cytoplasm"/>
    <property type="evidence" value="ECO:0007669"/>
    <property type="project" value="UniProtKB-SubCell"/>
</dbReference>
<dbReference type="GO" id="GO:0030681">
    <property type="term" value="C:multimeric ribonuclease P complex"/>
    <property type="evidence" value="ECO:0007669"/>
    <property type="project" value="TreeGrafter"/>
</dbReference>
<dbReference type="GO" id="GO:0004526">
    <property type="term" value="F:ribonuclease P activity"/>
    <property type="evidence" value="ECO:0007669"/>
    <property type="project" value="UniProtKB-UniRule"/>
</dbReference>
<dbReference type="GO" id="GO:0033204">
    <property type="term" value="F:ribonuclease P RNA binding"/>
    <property type="evidence" value="ECO:0007669"/>
    <property type="project" value="TreeGrafter"/>
</dbReference>
<dbReference type="GO" id="GO:0001682">
    <property type="term" value="P:tRNA 5'-leader removal"/>
    <property type="evidence" value="ECO:0007669"/>
    <property type="project" value="UniProtKB-UniRule"/>
</dbReference>
<dbReference type="Gene3D" id="3.30.70.3250">
    <property type="entry name" value="Ribonuclease P, Pop5 subunit"/>
    <property type="match status" value="1"/>
</dbReference>
<dbReference type="HAMAP" id="MF_00755">
    <property type="entry name" value="RNase_P_2"/>
    <property type="match status" value="1"/>
</dbReference>
<dbReference type="InterPro" id="IPR002759">
    <property type="entry name" value="Pop5/Rpp14/Rnp2-like"/>
</dbReference>
<dbReference type="InterPro" id="IPR038085">
    <property type="entry name" value="Rnp2-like_sf"/>
</dbReference>
<dbReference type="PANTHER" id="PTHR15441">
    <property type="entry name" value="RIBONUCLEASE P PROTEIN SUBUNIT P14"/>
    <property type="match status" value="1"/>
</dbReference>
<dbReference type="PANTHER" id="PTHR15441:SF2">
    <property type="entry name" value="RIBONUCLEASE P_MRP PROTEIN SUBUNIT POP5"/>
    <property type="match status" value="1"/>
</dbReference>
<dbReference type="Pfam" id="PF01900">
    <property type="entry name" value="RNase_P_Rpp14"/>
    <property type="match status" value="1"/>
</dbReference>
<dbReference type="SUPFAM" id="SSF160350">
    <property type="entry name" value="Rnp2-like"/>
    <property type="match status" value="1"/>
</dbReference>
<reference key="1">
    <citation type="journal article" date="2004" name="Genome Res.">
        <title>Genome sequence of Haloarcula marismortui: a halophilic archaeon from the Dead Sea.</title>
        <authorList>
            <person name="Baliga N.S."/>
            <person name="Bonneau R."/>
            <person name="Facciotti M.T."/>
            <person name="Pan M."/>
            <person name="Glusman G."/>
            <person name="Deutsch E.W."/>
            <person name="Shannon P."/>
            <person name="Chiu Y."/>
            <person name="Weng R.S."/>
            <person name="Gan R.R."/>
            <person name="Hung P."/>
            <person name="Date S.V."/>
            <person name="Marcotte E."/>
            <person name="Hood L."/>
            <person name="Ng W.V."/>
        </authorList>
    </citation>
    <scope>NUCLEOTIDE SEQUENCE [LARGE SCALE GENOMIC DNA]</scope>
    <source>
        <strain>ATCC 43049 / DSM 3752 / JCM 8966 / VKM B-1809</strain>
    </source>
</reference>
<keyword id="KW-0963">Cytoplasm</keyword>
<keyword id="KW-0255">Endonuclease</keyword>
<keyword id="KW-0378">Hydrolase</keyword>
<keyword id="KW-0540">Nuclease</keyword>
<keyword id="KW-1185">Reference proteome</keyword>
<keyword id="KW-0819">tRNA processing</keyword>
<sequence length="161" mass="18212">MKHLPKHLRPRWRYLAVGIETWPNASFGRRAFQREVWYAAQNLLGDTGSAETDMTVLQFHDYDGTAEAIVRTRRGQTNPARAALTCLDSVDDDDVRVRVRGISGTVRACEEKYIRGPPEFTEQRHVVFENADRSATVRPPRYDVETASDGAFVGATALDFR</sequence>
<evidence type="ECO:0000255" key="1">
    <source>
        <dbReference type="HAMAP-Rule" id="MF_00755"/>
    </source>
</evidence>
<comment type="function">
    <text evidence="1">Part of ribonuclease P, a protein complex that generates mature tRNA molecules by cleaving their 5'-ends.</text>
</comment>
<comment type="catalytic activity">
    <reaction evidence="1">
        <text>Endonucleolytic cleavage of RNA, removing 5'-extranucleotides from tRNA precursor.</text>
        <dbReference type="EC" id="3.1.26.5"/>
    </reaction>
</comment>
<comment type="subunit">
    <text evidence="1">Consists of a catalytic RNA component and at least 4-5 protein subunits.</text>
</comment>
<comment type="subcellular location">
    <subcellularLocation>
        <location evidence="1">Cytoplasm</location>
    </subcellularLocation>
</comment>
<comment type="similarity">
    <text evidence="1">Belongs to the eukaryotic/archaeal RNase P protein component 2 family.</text>
</comment>
<proteinExistence type="inferred from homology"/>
<gene>
    <name evidence="1" type="primary">rnp2</name>
    <name type="ordered locus">rrnAC1175</name>
</gene>
<feature type="chain" id="PRO_1000148365" description="Ribonuclease P protein component 2">
    <location>
        <begin position="1"/>
        <end position="161"/>
    </location>
</feature>
<name>RNP2_HALMA</name>
<accession>Q5V2X7</accession>
<organism>
    <name type="scientific">Haloarcula marismortui (strain ATCC 43049 / DSM 3752 / JCM 8966 / VKM B-1809)</name>
    <name type="common">Halobacterium marismortui</name>
    <dbReference type="NCBI Taxonomy" id="272569"/>
    <lineage>
        <taxon>Archaea</taxon>
        <taxon>Methanobacteriati</taxon>
        <taxon>Methanobacteriota</taxon>
        <taxon>Stenosarchaea group</taxon>
        <taxon>Halobacteria</taxon>
        <taxon>Halobacteriales</taxon>
        <taxon>Haloarculaceae</taxon>
        <taxon>Haloarcula</taxon>
    </lineage>
</organism>
<protein>
    <recommendedName>
        <fullName evidence="1">Ribonuclease P protein component 2</fullName>
        <shortName evidence="1">RNase P component 2</shortName>
        <ecNumber evidence="1">3.1.26.5</ecNumber>
    </recommendedName>
    <alternativeName>
        <fullName evidence="1">Pop5</fullName>
    </alternativeName>
</protein>